<name>COQ4_DROYA</name>
<dbReference type="EC" id="4.1.1.130" evidence="1"/>
<dbReference type="EMBL" id="CM000159">
    <property type="protein sequence ID" value="EDW94725.1"/>
    <property type="status" value="ALT_INIT"/>
    <property type="molecule type" value="Genomic_DNA"/>
</dbReference>
<dbReference type="SMR" id="B4PJV6"/>
<dbReference type="EnsemblMetazoa" id="FBtr0395094">
    <property type="protein sequence ID" value="FBpp0354372"/>
    <property type="gene ID" value="FBgn0239379"/>
</dbReference>
<dbReference type="EnsemblMetazoa" id="XM_015195090.2">
    <property type="protein sequence ID" value="XP_015050576.1"/>
    <property type="gene ID" value="LOC6534333"/>
</dbReference>
<dbReference type="GeneID" id="6534333"/>
<dbReference type="KEGG" id="dya:Dyak_GE22150"/>
<dbReference type="eggNOG" id="KOG3244">
    <property type="taxonomic scope" value="Eukaryota"/>
</dbReference>
<dbReference type="OrthoDB" id="4249at2759"/>
<dbReference type="UniPathway" id="UPA00232"/>
<dbReference type="Proteomes" id="UP000002282">
    <property type="component" value="Chromosome 3L"/>
</dbReference>
<dbReference type="GO" id="GO:0031314">
    <property type="term" value="C:extrinsic component of mitochondrial inner membrane"/>
    <property type="evidence" value="ECO:0007669"/>
    <property type="project" value="UniProtKB-UniRule"/>
</dbReference>
<dbReference type="GO" id="GO:0006744">
    <property type="term" value="P:ubiquinone biosynthetic process"/>
    <property type="evidence" value="ECO:0007669"/>
    <property type="project" value="UniProtKB-UniRule"/>
</dbReference>
<dbReference type="HAMAP" id="MF_03111">
    <property type="entry name" value="Coq4"/>
    <property type="match status" value="1"/>
</dbReference>
<dbReference type="InterPro" id="IPR007715">
    <property type="entry name" value="Coq4"/>
</dbReference>
<dbReference type="InterPro" id="IPR027540">
    <property type="entry name" value="Coq4_euk"/>
</dbReference>
<dbReference type="PANTHER" id="PTHR12922">
    <property type="entry name" value="UBIQUINONE BIOSYNTHESIS PROTEIN"/>
    <property type="match status" value="1"/>
</dbReference>
<dbReference type="PANTHER" id="PTHR12922:SF7">
    <property type="entry name" value="UBIQUINONE BIOSYNTHESIS PROTEIN COQ4 HOMOLOG, MITOCHONDRIAL"/>
    <property type="match status" value="1"/>
</dbReference>
<dbReference type="Pfam" id="PF05019">
    <property type="entry name" value="Coq4"/>
    <property type="match status" value="1"/>
</dbReference>
<proteinExistence type="inferred from homology"/>
<protein>
    <recommendedName>
        <fullName evidence="1">Ubiquinone biosynthesis protein COQ4 homolog, mitochondrial</fullName>
    </recommendedName>
    <alternativeName>
        <fullName>4-hydroxy-3-methoxy-5-polyprenylbenzoate decarboxylase</fullName>
        <ecNumber evidence="1">4.1.1.130</ecNumber>
    </alternativeName>
    <alternativeName>
        <fullName evidence="1">Coenzyme Q biosynthesis protein 4 homolog</fullName>
    </alternativeName>
</protein>
<reference key="1">
    <citation type="journal article" date="2007" name="Nature">
        <title>Evolution of genes and genomes on the Drosophila phylogeny.</title>
        <authorList>
            <consortium name="Drosophila 12 genomes consortium"/>
        </authorList>
    </citation>
    <scope>NUCLEOTIDE SEQUENCE [LARGE SCALE GENOMIC DNA]</scope>
    <source>
        <strain>Tai18E2 / Tucson 14021-0261.01</strain>
    </source>
</reference>
<evidence type="ECO:0000255" key="1">
    <source>
        <dbReference type="HAMAP-Rule" id="MF_03111"/>
    </source>
</evidence>
<evidence type="ECO:0000305" key="2"/>
<keyword id="KW-0456">Lyase</keyword>
<keyword id="KW-0472">Membrane</keyword>
<keyword id="KW-0479">Metal-binding</keyword>
<keyword id="KW-0496">Mitochondrion</keyword>
<keyword id="KW-0999">Mitochondrion inner membrane</keyword>
<keyword id="KW-0831">Ubiquinone biosynthesis</keyword>
<keyword id="KW-0862">Zinc</keyword>
<sequence length="268" mass="30591">MMQRCLRLPKPLALRRGLHVAQVNGQAVATEAPEAEPQDAFERQYLKERIEISPFQRVFLGAGSSIAALLDPRRHDMIACLGETTGEDALLTILDTMQASEEGQRIMADKPRIHTSTIDFKYLETLPPDTFGAAYVKFLKDNQVTPDSRMAVRFLEDPKLAYLMTRYRECHDLIHTVLDMPTNMLGEVAVKWVEALNTGLPMCYGGAVFGAVRLRPKQRRAYLKHYLPWALENGKRSKPLMPVYWEKRWEQNIHELRSELGITVLNKA</sequence>
<gene>
    <name type="ORF">GE22150</name>
</gene>
<comment type="function">
    <text evidence="1">Lyase that catalyzes the C1-decarboxylation of 4-hydroxy-3-methoxy-5-(all-trans-polyprenyl)benzoic acid into 2-methoxy-6-(all-trans-polyprenyl)phenol during ubiquinone biosynthesis.</text>
</comment>
<comment type="catalytic activity">
    <reaction evidence="1">
        <text>a 4-hydroxy-3-methoxy-5-(all-trans-polyprenyl)benzoate + H(+) = a 2-methoxy-6-(all-trans-polyprenyl)phenol + CO2</text>
        <dbReference type="Rhea" id="RHEA:81179"/>
        <dbReference type="Rhea" id="RHEA-COMP:9551"/>
        <dbReference type="Rhea" id="RHEA-COMP:10931"/>
        <dbReference type="ChEBI" id="CHEBI:15378"/>
        <dbReference type="ChEBI" id="CHEBI:16526"/>
        <dbReference type="ChEBI" id="CHEBI:62731"/>
        <dbReference type="ChEBI" id="CHEBI:84443"/>
        <dbReference type="EC" id="4.1.1.130"/>
    </reaction>
</comment>
<comment type="cofactor">
    <cofactor evidence="1">
        <name>Zn(2+)</name>
        <dbReference type="ChEBI" id="CHEBI:29105"/>
    </cofactor>
</comment>
<comment type="pathway">
    <text evidence="1">Cofactor biosynthesis; ubiquinone biosynthesis.</text>
</comment>
<comment type="subunit">
    <text evidence="1">Component of a multi-subunit COQ enzyme complex.</text>
</comment>
<comment type="subcellular location">
    <subcellularLocation>
        <location evidence="1">Mitochondrion inner membrane</location>
        <topology evidence="1">Peripheral membrane protein</topology>
        <orientation evidence="1">Matrix side</orientation>
    </subcellularLocation>
</comment>
<comment type="miscellaneous">
    <text evidence="1">This protein may be expected to contain an N-terminal transit peptide but none has been predicted.</text>
</comment>
<comment type="similarity">
    <text evidence="1">Belongs to the COQ4 family.</text>
</comment>
<comment type="sequence caution" evidence="2">
    <conflict type="erroneous initiation">
        <sequence resource="EMBL-CDS" id="EDW94725"/>
    </conflict>
</comment>
<accession>B4PJV6</accession>
<organism>
    <name type="scientific">Drosophila yakuba</name>
    <name type="common">Fruit fly</name>
    <dbReference type="NCBI Taxonomy" id="7245"/>
    <lineage>
        <taxon>Eukaryota</taxon>
        <taxon>Metazoa</taxon>
        <taxon>Ecdysozoa</taxon>
        <taxon>Arthropoda</taxon>
        <taxon>Hexapoda</taxon>
        <taxon>Insecta</taxon>
        <taxon>Pterygota</taxon>
        <taxon>Neoptera</taxon>
        <taxon>Endopterygota</taxon>
        <taxon>Diptera</taxon>
        <taxon>Brachycera</taxon>
        <taxon>Muscomorpha</taxon>
        <taxon>Ephydroidea</taxon>
        <taxon>Drosophilidae</taxon>
        <taxon>Drosophila</taxon>
        <taxon>Sophophora</taxon>
    </lineage>
</organism>
<feature type="chain" id="PRO_0000388071" description="Ubiquinone biosynthesis protein COQ4 homolog, mitochondrial">
    <location>
        <begin position="1"/>
        <end position="268"/>
    </location>
</feature>
<feature type="binding site" evidence="1">
    <location>
        <position position="171"/>
    </location>
    <ligand>
        <name>Zn(2+)</name>
        <dbReference type="ChEBI" id="CHEBI:29105"/>
    </ligand>
</feature>
<feature type="binding site" evidence="1">
    <location>
        <position position="172"/>
    </location>
    <ligand>
        <name>Zn(2+)</name>
        <dbReference type="ChEBI" id="CHEBI:29105"/>
    </ligand>
</feature>
<feature type="binding site" evidence="1">
    <location>
        <position position="175"/>
    </location>
    <ligand>
        <name>Zn(2+)</name>
        <dbReference type="ChEBI" id="CHEBI:29105"/>
    </ligand>
</feature>
<feature type="binding site" evidence="1">
    <location>
        <position position="187"/>
    </location>
    <ligand>
        <name>Zn(2+)</name>
        <dbReference type="ChEBI" id="CHEBI:29105"/>
    </ligand>
</feature>